<evidence type="ECO:0000250" key="1"/>
<evidence type="ECO:0000256" key="2">
    <source>
        <dbReference type="SAM" id="MobiDB-lite"/>
    </source>
</evidence>
<evidence type="ECO:0000305" key="3"/>
<sequence length="231" mass="23914">MPCRREEEEEAGDEAEGEEDDDSFLLLQQSVTLGGSTDVDRLIVQIGETLQLDTAHDRPASPCAAPGPPPAPPRVLAALSADKTGTPARRLLRPTGSAETGDPAPPGAVRCVLGERGRVRGRSAPYCVAEIAPGASALPGPGRRGWLPGSVASHRIQQRRWTAGGARAADDDPHRLLQQLVLSGNLIKEAVRRLQRAVAAVAATSPASAPGSGGGRSGPDSVTLQPSGAWL</sequence>
<reference key="1">
    <citation type="journal article" date="2004" name="J. Biol. Chem.">
        <title>Characterization and functional analysis of the murine Frat2 gene.</title>
        <authorList>
            <person name="van Amerongen R."/>
            <person name="van der Gulden H."/>
            <person name="Bleeker F."/>
            <person name="Jonkers J."/>
            <person name="Berns A."/>
        </authorList>
    </citation>
    <scope>NUCLEOTIDE SEQUENCE [GENOMIC DNA]</scope>
    <source>
        <strain>129/Ola</strain>
    </source>
</reference>
<reference key="2">
    <citation type="journal article" date="2005" name="Science">
        <title>The transcriptional landscape of the mammalian genome.</title>
        <authorList>
            <person name="Carninci P."/>
            <person name="Kasukawa T."/>
            <person name="Katayama S."/>
            <person name="Gough J."/>
            <person name="Frith M.C."/>
            <person name="Maeda N."/>
            <person name="Oyama R."/>
            <person name="Ravasi T."/>
            <person name="Lenhard B."/>
            <person name="Wells C."/>
            <person name="Kodzius R."/>
            <person name="Shimokawa K."/>
            <person name="Bajic V.B."/>
            <person name="Brenner S.E."/>
            <person name="Batalov S."/>
            <person name="Forrest A.R."/>
            <person name="Zavolan M."/>
            <person name="Davis M.J."/>
            <person name="Wilming L.G."/>
            <person name="Aidinis V."/>
            <person name="Allen J.E."/>
            <person name="Ambesi-Impiombato A."/>
            <person name="Apweiler R."/>
            <person name="Aturaliya R.N."/>
            <person name="Bailey T.L."/>
            <person name="Bansal M."/>
            <person name="Baxter L."/>
            <person name="Beisel K.W."/>
            <person name="Bersano T."/>
            <person name="Bono H."/>
            <person name="Chalk A.M."/>
            <person name="Chiu K.P."/>
            <person name="Choudhary V."/>
            <person name="Christoffels A."/>
            <person name="Clutterbuck D.R."/>
            <person name="Crowe M.L."/>
            <person name="Dalla E."/>
            <person name="Dalrymple B.P."/>
            <person name="de Bono B."/>
            <person name="Della Gatta G."/>
            <person name="di Bernardo D."/>
            <person name="Down T."/>
            <person name="Engstrom P."/>
            <person name="Fagiolini M."/>
            <person name="Faulkner G."/>
            <person name="Fletcher C.F."/>
            <person name="Fukushima T."/>
            <person name="Furuno M."/>
            <person name="Futaki S."/>
            <person name="Gariboldi M."/>
            <person name="Georgii-Hemming P."/>
            <person name="Gingeras T.R."/>
            <person name="Gojobori T."/>
            <person name="Green R.E."/>
            <person name="Gustincich S."/>
            <person name="Harbers M."/>
            <person name="Hayashi Y."/>
            <person name="Hensch T.K."/>
            <person name="Hirokawa N."/>
            <person name="Hill D."/>
            <person name="Huminiecki L."/>
            <person name="Iacono M."/>
            <person name="Ikeo K."/>
            <person name="Iwama A."/>
            <person name="Ishikawa T."/>
            <person name="Jakt M."/>
            <person name="Kanapin A."/>
            <person name="Katoh M."/>
            <person name="Kawasawa Y."/>
            <person name="Kelso J."/>
            <person name="Kitamura H."/>
            <person name="Kitano H."/>
            <person name="Kollias G."/>
            <person name="Krishnan S.P."/>
            <person name="Kruger A."/>
            <person name="Kummerfeld S.K."/>
            <person name="Kurochkin I.V."/>
            <person name="Lareau L.F."/>
            <person name="Lazarevic D."/>
            <person name="Lipovich L."/>
            <person name="Liu J."/>
            <person name="Liuni S."/>
            <person name="McWilliam S."/>
            <person name="Madan Babu M."/>
            <person name="Madera M."/>
            <person name="Marchionni L."/>
            <person name="Matsuda H."/>
            <person name="Matsuzawa S."/>
            <person name="Miki H."/>
            <person name="Mignone F."/>
            <person name="Miyake S."/>
            <person name="Morris K."/>
            <person name="Mottagui-Tabar S."/>
            <person name="Mulder N."/>
            <person name="Nakano N."/>
            <person name="Nakauchi H."/>
            <person name="Ng P."/>
            <person name="Nilsson R."/>
            <person name="Nishiguchi S."/>
            <person name="Nishikawa S."/>
            <person name="Nori F."/>
            <person name="Ohara O."/>
            <person name="Okazaki Y."/>
            <person name="Orlando V."/>
            <person name="Pang K.C."/>
            <person name="Pavan W.J."/>
            <person name="Pavesi G."/>
            <person name="Pesole G."/>
            <person name="Petrovsky N."/>
            <person name="Piazza S."/>
            <person name="Reed J."/>
            <person name="Reid J.F."/>
            <person name="Ring B.Z."/>
            <person name="Ringwald M."/>
            <person name="Rost B."/>
            <person name="Ruan Y."/>
            <person name="Salzberg S.L."/>
            <person name="Sandelin A."/>
            <person name="Schneider C."/>
            <person name="Schoenbach C."/>
            <person name="Sekiguchi K."/>
            <person name="Semple C.A."/>
            <person name="Seno S."/>
            <person name="Sessa L."/>
            <person name="Sheng Y."/>
            <person name="Shibata Y."/>
            <person name="Shimada H."/>
            <person name="Shimada K."/>
            <person name="Silva D."/>
            <person name="Sinclair B."/>
            <person name="Sperling S."/>
            <person name="Stupka E."/>
            <person name="Sugiura K."/>
            <person name="Sultana R."/>
            <person name="Takenaka Y."/>
            <person name="Taki K."/>
            <person name="Tammoja K."/>
            <person name="Tan S.L."/>
            <person name="Tang S."/>
            <person name="Taylor M.S."/>
            <person name="Tegner J."/>
            <person name="Teichmann S.A."/>
            <person name="Ueda H.R."/>
            <person name="van Nimwegen E."/>
            <person name="Verardo R."/>
            <person name="Wei C.L."/>
            <person name="Yagi K."/>
            <person name="Yamanishi H."/>
            <person name="Zabarovsky E."/>
            <person name="Zhu S."/>
            <person name="Zimmer A."/>
            <person name="Hide W."/>
            <person name="Bult C."/>
            <person name="Grimmond S.M."/>
            <person name="Teasdale R.D."/>
            <person name="Liu E.T."/>
            <person name="Brusic V."/>
            <person name="Quackenbush J."/>
            <person name="Wahlestedt C."/>
            <person name="Mattick J.S."/>
            <person name="Hume D.A."/>
            <person name="Kai C."/>
            <person name="Sasaki D."/>
            <person name="Tomaru Y."/>
            <person name="Fukuda S."/>
            <person name="Kanamori-Katayama M."/>
            <person name="Suzuki M."/>
            <person name="Aoki J."/>
            <person name="Arakawa T."/>
            <person name="Iida J."/>
            <person name="Imamura K."/>
            <person name="Itoh M."/>
            <person name="Kato T."/>
            <person name="Kawaji H."/>
            <person name="Kawagashira N."/>
            <person name="Kawashima T."/>
            <person name="Kojima M."/>
            <person name="Kondo S."/>
            <person name="Konno H."/>
            <person name="Nakano K."/>
            <person name="Ninomiya N."/>
            <person name="Nishio T."/>
            <person name="Okada M."/>
            <person name="Plessy C."/>
            <person name="Shibata K."/>
            <person name="Shiraki T."/>
            <person name="Suzuki S."/>
            <person name="Tagami M."/>
            <person name="Waki K."/>
            <person name="Watahiki A."/>
            <person name="Okamura-Oho Y."/>
            <person name="Suzuki H."/>
            <person name="Kawai J."/>
            <person name="Hayashizaki Y."/>
        </authorList>
    </citation>
    <scope>NUCLEOTIDE SEQUENCE [LARGE SCALE MRNA]</scope>
    <source>
        <strain>C57BL/6J</strain>
        <tissue>Cerebellum</tissue>
    </source>
</reference>
<reference key="3">
    <citation type="journal article" date="2004" name="Genome Res.">
        <title>The status, quality, and expansion of the NIH full-length cDNA project: the Mammalian Gene Collection (MGC).</title>
        <authorList>
            <consortium name="The MGC Project Team"/>
        </authorList>
    </citation>
    <scope>NUCLEOTIDE SEQUENCE [LARGE SCALE MRNA]</scope>
    <source>
        <strain>C57BL/6J</strain>
        <strain>FVB/N</strain>
        <tissue>Brain</tissue>
        <tissue>Colon</tissue>
    </source>
</reference>
<proteinExistence type="evidence at transcript level"/>
<dbReference type="EMBL" id="AY518895">
    <property type="protein sequence ID" value="AAR99812.1"/>
    <property type="molecule type" value="Genomic_DNA"/>
</dbReference>
<dbReference type="EMBL" id="AK081171">
    <property type="protein sequence ID" value="BAC38155.1"/>
    <property type="molecule type" value="mRNA"/>
</dbReference>
<dbReference type="EMBL" id="BC034214">
    <property type="protein sequence ID" value="AAH34214.1"/>
    <property type="molecule type" value="mRNA"/>
</dbReference>
<dbReference type="EMBL" id="BC085510">
    <property type="protein sequence ID" value="AAH85510.1"/>
    <property type="molecule type" value="mRNA"/>
</dbReference>
<dbReference type="CCDS" id="CCDS29813.1"/>
<dbReference type="RefSeq" id="NP_808271.1">
    <property type="nucleotide sequence ID" value="NM_177603.3"/>
</dbReference>
<dbReference type="SMR" id="Q8K025"/>
<dbReference type="ComplexPortal" id="CPX-110">
    <property type="entry name" value="Nuclear export complex Frat2-Gsk3b"/>
</dbReference>
<dbReference type="FunCoup" id="Q8K025">
    <property type="interactions" value="522"/>
</dbReference>
<dbReference type="STRING" id="10090.ENSMUSP00000052788"/>
<dbReference type="PhosphoSitePlus" id="Q8K025"/>
<dbReference type="PaxDb" id="10090-ENSMUSP00000052788"/>
<dbReference type="ProteomicsDB" id="271801"/>
<dbReference type="Antibodypedia" id="30842">
    <property type="antibodies" value="139 antibodies from 24 providers"/>
</dbReference>
<dbReference type="DNASU" id="212398"/>
<dbReference type="Ensembl" id="ENSMUST00000059231.4">
    <property type="protein sequence ID" value="ENSMUSP00000052788.3"/>
    <property type="gene ID" value="ENSMUSG00000047604.4"/>
</dbReference>
<dbReference type="GeneID" id="212398"/>
<dbReference type="KEGG" id="mmu:212398"/>
<dbReference type="UCSC" id="uc008hmj.3">
    <property type="organism name" value="mouse"/>
</dbReference>
<dbReference type="AGR" id="MGI:2673967"/>
<dbReference type="CTD" id="23401"/>
<dbReference type="MGI" id="MGI:2673967">
    <property type="gene designation" value="Frat2"/>
</dbReference>
<dbReference type="VEuPathDB" id="HostDB:ENSMUSG00000047604"/>
<dbReference type="eggNOG" id="ENOG502S0IC">
    <property type="taxonomic scope" value="Eukaryota"/>
</dbReference>
<dbReference type="GeneTree" id="ENSGT00390000007081"/>
<dbReference type="HOGENOM" id="CLU_101225_1_0_1"/>
<dbReference type="InParanoid" id="Q8K025"/>
<dbReference type="OMA" id="PWNKKRI"/>
<dbReference type="OrthoDB" id="6381246at2759"/>
<dbReference type="PhylomeDB" id="Q8K025"/>
<dbReference type="TreeFam" id="TF330804"/>
<dbReference type="Reactome" id="R-MMU-196299">
    <property type="pathway name" value="Beta-catenin phosphorylation cascade"/>
</dbReference>
<dbReference type="Reactome" id="R-MMU-4641262">
    <property type="pathway name" value="Disassembly of the destruction complex and recruitment of AXIN to the membrane"/>
</dbReference>
<dbReference type="BioGRID-ORCS" id="212398">
    <property type="hits" value="3 hits in 77 CRISPR screens"/>
</dbReference>
<dbReference type="ChiTaRS" id="Frat2">
    <property type="organism name" value="mouse"/>
</dbReference>
<dbReference type="PRO" id="PR:Q8K025"/>
<dbReference type="Proteomes" id="UP000000589">
    <property type="component" value="Chromosome 19"/>
</dbReference>
<dbReference type="RNAct" id="Q8K025">
    <property type="molecule type" value="protein"/>
</dbReference>
<dbReference type="Bgee" id="ENSMUSG00000047604">
    <property type="expression patterns" value="Expressed in spermatid and 162 other cell types or tissues"/>
</dbReference>
<dbReference type="GO" id="GO:0005737">
    <property type="term" value="C:cytoplasm"/>
    <property type="evidence" value="ECO:0000250"/>
    <property type="project" value="ComplexPortal"/>
</dbReference>
<dbReference type="GO" id="GO:0005634">
    <property type="term" value="C:nucleus"/>
    <property type="evidence" value="ECO:0000250"/>
    <property type="project" value="ComplexPortal"/>
</dbReference>
<dbReference type="GO" id="GO:0060070">
    <property type="term" value="P:canonical Wnt signaling pathway"/>
    <property type="evidence" value="ECO:0000250"/>
    <property type="project" value="ComplexPortal"/>
</dbReference>
<dbReference type="GO" id="GO:0046825">
    <property type="term" value="P:regulation of protein export from nucleus"/>
    <property type="evidence" value="ECO:0000250"/>
    <property type="project" value="ComplexPortal"/>
</dbReference>
<dbReference type="GO" id="GO:0016055">
    <property type="term" value="P:Wnt signaling pathway"/>
    <property type="evidence" value="ECO:0000316"/>
    <property type="project" value="MGI"/>
</dbReference>
<dbReference type="InterPro" id="IPR008014">
    <property type="entry name" value="GSK3-bd"/>
</dbReference>
<dbReference type="PANTHER" id="PTHR35154">
    <property type="entry name" value="GBP PROTEIN"/>
    <property type="match status" value="1"/>
</dbReference>
<dbReference type="PANTHER" id="PTHR35154:SF2">
    <property type="entry name" value="GSK-3-BINDING PROTEIN FRAT2"/>
    <property type="match status" value="1"/>
</dbReference>
<dbReference type="Pfam" id="PF05350">
    <property type="entry name" value="GSK-3_bind"/>
    <property type="match status" value="2"/>
</dbReference>
<gene>
    <name type="primary">Frat2</name>
</gene>
<comment type="function">
    <text>Positively regulates the Wnt signaling pathway by stabilizing beta-catenin through the association with GSK-3.</text>
</comment>
<comment type="subunit">
    <text>Binds GSK-3 and prevents GSK-3-dependent phosphorylation.</text>
</comment>
<comment type="similarity">
    <text evidence="3">Belongs to the GSK-3-binding protein family.</text>
</comment>
<name>FRAT2_MOUSE</name>
<organism>
    <name type="scientific">Mus musculus</name>
    <name type="common">Mouse</name>
    <dbReference type="NCBI Taxonomy" id="10090"/>
    <lineage>
        <taxon>Eukaryota</taxon>
        <taxon>Metazoa</taxon>
        <taxon>Chordata</taxon>
        <taxon>Craniata</taxon>
        <taxon>Vertebrata</taxon>
        <taxon>Euteleostomi</taxon>
        <taxon>Mammalia</taxon>
        <taxon>Eutheria</taxon>
        <taxon>Euarchontoglires</taxon>
        <taxon>Glires</taxon>
        <taxon>Rodentia</taxon>
        <taxon>Myomorpha</taxon>
        <taxon>Muroidea</taxon>
        <taxon>Muridae</taxon>
        <taxon>Murinae</taxon>
        <taxon>Mus</taxon>
        <taxon>Mus</taxon>
    </lineage>
</organism>
<keyword id="KW-1185">Reference proteome</keyword>
<keyword id="KW-0879">Wnt signaling pathway</keyword>
<accession>Q8K025</accession>
<feature type="chain" id="PRO_0000087335" description="GSK-3-binding protein FRAT2">
    <location>
        <begin position="1"/>
        <end position="231"/>
    </location>
</feature>
<feature type="region of interest" description="Disordered" evidence="2">
    <location>
        <begin position="1"/>
        <end position="24"/>
    </location>
</feature>
<feature type="region of interest" description="Disordered" evidence="2">
    <location>
        <begin position="53"/>
        <end position="109"/>
    </location>
</feature>
<feature type="region of interest" description="Involved in GSK-3 binding" evidence="1">
    <location>
        <begin position="172"/>
        <end position="194"/>
    </location>
</feature>
<feature type="region of interest" description="Disordered" evidence="2">
    <location>
        <begin position="203"/>
        <end position="231"/>
    </location>
</feature>
<feature type="compositionally biased region" description="Acidic residues" evidence="2">
    <location>
        <begin position="7"/>
        <end position="23"/>
    </location>
</feature>
<protein>
    <recommendedName>
        <fullName>GSK-3-binding protein FRAT2</fullName>
    </recommendedName>
    <alternativeName>
        <fullName>Frequently rearranged in advanced T-cell lymphomas 2</fullName>
        <shortName>FRAT-2</shortName>
    </alternativeName>
</protein>